<proteinExistence type="evidence at protein level"/>
<keyword id="KW-0472">Membrane</keyword>
<keyword id="KW-1185">Reference proteome</keyword>
<keyword id="KW-0812">Transmembrane</keyword>
<keyword id="KW-1133">Transmembrane helix</keyword>
<keyword id="KW-0813">Transport</keyword>
<accession>P53744</accession>
<accession>D6W1N1</accession>
<protein>
    <recommendedName>
        <fullName>7-keto 8-aminopelargonic acid transporter</fullName>
        <shortName>KAPA transporter</shortName>
    </recommendedName>
</protein>
<evidence type="ECO:0000255" key="1"/>
<evidence type="ECO:0000269" key="2">
    <source>
    </source>
</evidence>
<evidence type="ECO:0000305" key="3"/>
<gene>
    <name type="primary">BIO5</name>
    <name type="ordered locus">YNR056C</name>
    <name type="ORF">N3502</name>
</gene>
<organism>
    <name type="scientific">Saccharomyces cerevisiae (strain ATCC 204508 / S288c)</name>
    <name type="common">Baker's yeast</name>
    <dbReference type="NCBI Taxonomy" id="559292"/>
    <lineage>
        <taxon>Eukaryota</taxon>
        <taxon>Fungi</taxon>
        <taxon>Dikarya</taxon>
        <taxon>Ascomycota</taxon>
        <taxon>Saccharomycotina</taxon>
        <taxon>Saccharomycetes</taxon>
        <taxon>Saccharomycetales</taxon>
        <taxon>Saccharomycetaceae</taxon>
        <taxon>Saccharomyces</taxon>
    </lineage>
</organism>
<reference key="1">
    <citation type="journal article" date="1999" name="Gene">
        <title>Characterization of the biotin biosynthesis pathway in Saccharomyces cerevisiae and evidence for a cluster containing BIO5, a novel gene involved in vitamer uptake.</title>
        <authorList>
            <person name="Phalip V."/>
            <person name="Kuhn I."/>
            <person name="Lemoine Y."/>
            <person name="Jeltsch J.-M."/>
        </authorList>
    </citation>
    <scope>NUCLEOTIDE SEQUENCE [GENOMIC DNA]</scope>
    <scope>FUNCTION</scope>
    <source>
        <strain>ATCC 28383 / FL100 / VTT C-80102</strain>
    </source>
</reference>
<reference key="2">
    <citation type="journal article" date="1997" name="Nature">
        <title>The nucleotide sequence of Saccharomyces cerevisiae chromosome XIV and its evolutionary implications.</title>
        <authorList>
            <person name="Philippsen P."/>
            <person name="Kleine K."/>
            <person name="Poehlmann R."/>
            <person name="Duesterhoeft A."/>
            <person name="Hamberg K."/>
            <person name="Hegemann J.H."/>
            <person name="Obermaier B."/>
            <person name="Urrestarazu L.A."/>
            <person name="Aert R."/>
            <person name="Albermann K."/>
            <person name="Altmann R."/>
            <person name="Andre B."/>
            <person name="Baladron V."/>
            <person name="Ballesta J.P.G."/>
            <person name="Becam A.-M."/>
            <person name="Beinhauer J.D."/>
            <person name="Boskovic J."/>
            <person name="Buitrago M.J."/>
            <person name="Bussereau F."/>
            <person name="Coster F."/>
            <person name="Crouzet M."/>
            <person name="D'Angelo M."/>
            <person name="Dal Pero F."/>
            <person name="De Antoni A."/>
            <person name="del Rey F."/>
            <person name="Doignon F."/>
            <person name="Domdey H."/>
            <person name="Dubois E."/>
            <person name="Fiedler T.A."/>
            <person name="Fleig U."/>
            <person name="Floeth M."/>
            <person name="Fritz C."/>
            <person name="Gaillardin C."/>
            <person name="Garcia-Cantalejo J.M."/>
            <person name="Glansdorff N."/>
            <person name="Goffeau A."/>
            <person name="Gueldener U."/>
            <person name="Herbert C.J."/>
            <person name="Heumann K."/>
            <person name="Heuss-Neitzel D."/>
            <person name="Hilbert H."/>
            <person name="Hinni K."/>
            <person name="Iraqui Houssaini I."/>
            <person name="Jacquet M."/>
            <person name="Jimenez A."/>
            <person name="Jonniaux J.-L."/>
            <person name="Karpfinger-Hartl L."/>
            <person name="Lanfranchi G."/>
            <person name="Lepingle A."/>
            <person name="Levesque H."/>
            <person name="Lyck R."/>
            <person name="Maftahi M."/>
            <person name="Mallet L."/>
            <person name="Maurer C.T.C."/>
            <person name="Messenguy F."/>
            <person name="Mewes H.-W."/>
            <person name="Moestl D."/>
            <person name="Nasr F."/>
            <person name="Nicaud J.-M."/>
            <person name="Niedenthal R.K."/>
            <person name="Pandolfo D."/>
            <person name="Pierard A."/>
            <person name="Piravandi E."/>
            <person name="Planta R.J."/>
            <person name="Pohl T.M."/>
            <person name="Purnelle B."/>
            <person name="Rebischung C."/>
            <person name="Remacha M.A."/>
            <person name="Revuelta J.L."/>
            <person name="Rinke M."/>
            <person name="Saiz J.E."/>
            <person name="Sartorello F."/>
            <person name="Scherens B."/>
            <person name="Sen-Gupta M."/>
            <person name="Soler-Mira A."/>
            <person name="Urbanus J.H.M."/>
            <person name="Valle G."/>
            <person name="Van Dyck L."/>
            <person name="Verhasselt P."/>
            <person name="Vierendeels F."/>
            <person name="Vissers S."/>
            <person name="Voet M."/>
            <person name="Volckaert G."/>
            <person name="Wach A."/>
            <person name="Wambutt R."/>
            <person name="Wedler H."/>
            <person name="Zollner A."/>
            <person name="Hani J."/>
        </authorList>
    </citation>
    <scope>NUCLEOTIDE SEQUENCE [LARGE SCALE GENOMIC DNA]</scope>
    <source>
        <strain>ATCC 204508 / S288c</strain>
    </source>
</reference>
<reference key="3">
    <citation type="journal article" date="2014" name="G3 (Bethesda)">
        <title>The reference genome sequence of Saccharomyces cerevisiae: Then and now.</title>
        <authorList>
            <person name="Engel S.R."/>
            <person name="Dietrich F.S."/>
            <person name="Fisk D.G."/>
            <person name="Binkley G."/>
            <person name="Balakrishnan R."/>
            <person name="Costanzo M.C."/>
            <person name="Dwight S.S."/>
            <person name="Hitz B.C."/>
            <person name="Karra K."/>
            <person name="Nash R.S."/>
            <person name="Weng S."/>
            <person name="Wong E.D."/>
            <person name="Lloyd P."/>
            <person name="Skrzypek M.S."/>
            <person name="Miyasato S.R."/>
            <person name="Simison M."/>
            <person name="Cherry J.M."/>
        </authorList>
    </citation>
    <scope>GENOME REANNOTATION</scope>
    <source>
        <strain>ATCC 204508 / S288c</strain>
    </source>
</reference>
<reference key="4">
    <citation type="journal article" date="2006" name="Proc. Natl. Acad. Sci. U.S.A.">
        <title>A global topology map of the Saccharomyces cerevisiae membrane proteome.</title>
        <authorList>
            <person name="Kim H."/>
            <person name="Melen K."/>
            <person name="Oesterberg M."/>
            <person name="von Heijne G."/>
        </authorList>
    </citation>
    <scope>TOPOLOGY [LARGE SCALE ANALYSIS]</scope>
    <source>
        <strain>ATCC 208353 / W303-1A</strain>
    </source>
</reference>
<comment type="function">
    <text evidence="2">Transport into the cell of 7-keto 8-aminopelargonic acid.</text>
</comment>
<comment type="subcellular location">
    <subcellularLocation>
        <location>Membrane</location>
        <topology>Multi-pass membrane protein</topology>
    </subcellularLocation>
</comment>
<comment type="similarity">
    <text evidence="3">Belongs to the amino acid-polyamine-organocation (APC) superfamily.</text>
</comment>
<name>BIO5_YEAST</name>
<feature type="chain" id="PRO_0000054282" description="7-keto 8-aminopelargonic acid transporter">
    <location>
        <begin position="1"/>
        <end position="561"/>
    </location>
</feature>
<feature type="topological domain" description="Cytoplasmic" evidence="1">
    <location>
        <begin position="1"/>
        <end position="49"/>
    </location>
</feature>
<feature type="transmembrane region" description="Helical" evidence="1">
    <location>
        <begin position="50"/>
        <end position="70"/>
    </location>
</feature>
<feature type="topological domain" description="Extracellular" evidence="1">
    <location>
        <begin position="71"/>
        <end position="77"/>
    </location>
</feature>
<feature type="transmembrane region" description="Helical" evidence="1">
    <location>
        <begin position="78"/>
        <end position="98"/>
    </location>
</feature>
<feature type="topological domain" description="Cytoplasmic" evidence="1">
    <location>
        <begin position="99"/>
        <end position="160"/>
    </location>
</feature>
<feature type="transmembrane region" description="Helical" evidence="1">
    <location>
        <begin position="161"/>
        <end position="181"/>
    </location>
</feature>
<feature type="topological domain" description="Extracellular" evidence="1">
    <location>
        <begin position="182"/>
        <end position="204"/>
    </location>
</feature>
<feature type="transmembrane region" description="Helical" evidence="1">
    <location>
        <begin position="205"/>
        <end position="225"/>
    </location>
</feature>
<feature type="topological domain" description="Cytoplasmic" evidence="1">
    <location>
        <begin position="226"/>
        <end position="230"/>
    </location>
</feature>
<feature type="transmembrane region" description="Helical" evidence="1">
    <location>
        <begin position="231"/>
        <end position="251"/>
    </location>
</feature>
<feature type="topological domain" description="Extracellular" evidence="1">
    <location>
        <begin position="252"/>
        <end position="281"/>
    </location>
</feature>
<feature type="transmembrane region" description="Helical" evidence="1">
    <location>
        <begin position="282"/>
        <end position="302"/>
    </location>
</feature>
<feature type="topological domain" description="Cytoplasmic" evidence="1">
    <location>
        <begin position="303"/>
        <end position="321"/>
    </location>
</feature>
<feature type="transmembrane region" description="Helical" evidence="1">
    <location>
        <begin position="322"/>
        <end position="342"/>
    </location>
</feature>
<feature type="topological domain" description="Extracellular" evidence="1">
    <location>
        <begin position="343"/>
        <end position="369"/>
    </location>
</feature>
<feature type="transmembrane region" description="Helical" evidence="1">
    <location>
        <begin position="370"/>
        <end position="390"/>
    </location>
</feature>
<feature type="topological domain" description="Cytoplasmic" evidence="1">
    <location>
        <begin position="391"/>
        <end position="439"/>
    </location>
</feature>
<feature type="transmembrane region" description="Helical" evidence="1">
    <location>
        <begin position="440"/>
        <end position="460"/>
    </location>
</feature>
<feature type="topological domain" description="Extracellular" evidence="1">
    <location>
        <position position="461"/>
    </location>
</feature>
<feature type="transmembrane region" description="Helical" evidence="1">
    <location>
        <begin position="462"/>
        <end position="482"/>
    </location>
</feature>
<feature type="topological domain" description="Cytoplasmic" evidence="1">
    <location>
        <begin position="483"/>
        <end position="507"/>
    </location>
</feature>
<feature type="transmembrane region" description="Helical" evidence="1">
    <location>
        <begin position="508"/>
        <end position="528"/>
    </location>
</feature>
<feature type="topological domain" description="Extracellular" evidence="1">
    <location>
        <begin position="529"/>
        <end position="540"/>
    </location>
</feature>
<feature type="transmembrane region" description="Helical" evidence="1">
    <location>
        <begin position="541"/>
        <end position="560"/>
    </location>
</feature>
<feature type="topological domain" description="Cytoplasmic" evidence="1">
    <location>
        <position position="561"/>
    </location>
</feature>
<dbReference type="EMBL" id="U90440">
    <property type="protein sequence ID" value="AAB50012.1"/>
    <property type="molecule type" value="Genomic_DNA"/>
</dbReference>
<dbReference type="EMBL" id="Z71671">
    <property type="protein sequence ID" value="CAA96337.1"/>
    <property type="molecule type" value="Genomic_DNA"/>
</dbReference>
<dbReference type="EMBL" id="BK006947">
    <property type="protein sequence ID" value="DAA10597.1"/>
    <property type="molecule type" value="Genomic_DNA"/>
</dbReference>
<dbReference type="PIR" id="S63388">
    <property type="entry name" value="S63388"/>
</dbReference>
<dbReference type="RefSeq" id="NP_014454.3">
    <property type="nucleotide sequence ID" value="NM_001183233.3"/>
</dbReference>
<dbReference type="BioGRID" id="35882">
    <property type="interactions" value="47"/>
</dbReference>
<dbReference type="DIP" id="DIP-7726N"/>
<dbReference type="FunCoup" id="P53744">
    <property type="interactions" value="41"/>
</dbReference>
<dbReference type="IntAct" id="P53744">
    <property type="interactions" value="4"/>
</dbReference>
<dbReference type="MINT" id="P53744"/>
<dbReference type="STRING" id="4932.YNR056C"/>
<dbReference type="TCDB" id="2.A.3.4.4">
    <property type="family name" value="the amino acid-polyamine-organocation (apc) family"/>
</dbReference>
<dbReference type="CarbonylDB" id="P53744"/>
<dbReference type="PaxDb" id="4932-YNR056C"/>
<dbReference type="PeptideAtlas" id="P53744"/>
<dbReference type="TopDownProteomics" id="P53744"/>
<dbReference type="EnsemblFungi" id="YNR056C_mRNA">
    <property type="protein sequence ID" value="YNR056C"/>
    <property type="gene ID" value="YNR056C"/>
</dbReference>
<dbReference type="GeneID" id="855793"/>
<dbReference type="KEGG" id="sce:YNR056C"/>
<dbReference type="AGR" id="SGD:S000005339"/>
<dbReference type="SGD" id="S000005339">
    <property type="gene designation" value="BIO5"/>
</dbReference>
<dbReference type="VEuPathDB" id="FungiDB:YNR056C"/>
<dbReference type="eggNOG" id="KOG1289">
    <property type="taxonomic scope" value="Eukaryota"/>
</dbReference>
<dbReference type="HOGENOM" id="CLU_004495_2_3_1"/>
<dbReference type="InParanoid" id="P53744"/>
<dbReference type="OMA" id="MITCLAC"/>
<dbReference type="OrthoDB" id="2417308at2759"/>
<dbReference type="BioCyc" id="YEAST:G3O-33362-MONOMER"/>
<dbReference type="BioGRID-ORCS" id="855793">
    <property type="hits" value="0 hits in 10 CRISPR screens"/>
</dbReference>
<dbReference type="PRO" id="PR:P53744"/>
<dbReference type="Proteomes" id="UP000002311">
    <property type="component" value="Chromosome XIV"/>
</dbReference>
<dbReference type="RNAct" id="P53744">
    <property type="molecule type" value="protein"/>
</dbReference>
<dbReference type="GO" id="GO:0005783">
    <property type="term" value="C:endoplasmic reticulum"/>
    <property type="evidence" value="ECO:0007005"/>
    <property type="project" value="SGD"/>
</dbReference>
<dbReference type="GO" id="GO:0016020">
    <property type="term" value="C:membrane"/>
    <property type="evidence" value="ECO:0007669"/>
    <property type="project" value="UniProtKB-SubCell"/>
</dbReference>
<dbReference type="GO" id="GO:0015185">
    <property type="term" value="F:gamma-aminobutyric acid transmembrane transporter activity"/>
    <property type="evidence" value="ECO:0000318"/>
    <property type="project" value="GO_Central"/>
</dbReference>
<dbReference type="GO" id="GO:0022857">
    <property type="term" value="F:transmembrane transporter activity"/>
    <property type="evidence" value="ECO:0000314"/>
    <property type="project" value="SGD"/>
</dbReference>
<dbReference type="GO" id="GO:0009102">
    <property type="term" value="P:biotin biosynthetic process"/>
    <property type="evidence" value="ECO:0000315"/>
    <property type="project" value="SGD"/>
</dbReference>
<dbReference type="GO" id="GO:0015812">
    <property type="term" value="P:gamma-aminobutyric acid transport"/>
    <property type="evidence" value="ECO:0000318"/>
    <property type="project" value="GO_Central"/>
</dbReference>
<dbReference type="GO" id="GO:0051180">
    <property type="term" value="P:vitamin transport"/>
    <property type="evidence" value="ECO:0000314"/>
    <property type="project" value="SGD"/>
</dbReference>
<dbReference type="Gene3D" id="1.20.1740.10">
    <property type="entry name" value="Amino acid/polyamine transporter I"/>
    <property type="match status" value="1"/>
</dbReference>
<dbReference type="InterPro" id="IPR002293">
    <property type="entry name" value="AA/rel_permease1"/>
</dbReference>
<dbReference type="PANTHER" id="PTHR45649:SF16">
    <property type="entry name" value="7-KETO 8-AMINOPELARGONIC ACID TRANSPORTER"/>
    <property type="match status" value="1"/>
</dbReference>
<dbReference type="PANTHER" id="PTHR45649">
    <property type="entry name" value="AMINO-ACID PERMEASE BAT1"/>
    <property type="match status" value="1"/>
</dbReference>
<dbReference type="Pfam" id="PF13520">
    <property type="entry name" value="AA_permease_2"/>
    <property type="match status" value="1"/>
</dbReference>
<dbReference type="PIRSF" id="PIRSF006060">
    <property type="entry name" value="AA_transporter"/>
    <property type="match status" value="1"/>
</dbReference>
<sequence>MNRVGAVFLFVYERNFFLSIVPDRHRTEIRMSSSERSEVKFDKHFNWWSLLGIAFSLSCSWVGISASMAVGIASGGPLLIIYGLIIAAFFSLMCGISLGDFAAILPNSSGGSFWVLKMLEQESVTLKTPEYEDPSDDDEEVFLENYCQTFNVEVSSKFQKVSSMVVGLLNYFGAIFTTASICSSLSMSCIGIHKLLHPDYELKHWHVFVGYECINAVLTLFNIYSTPLPYISQFGLYTSLLSFAMTFIICIVSRSDNTVDPWPKASNIFGSFDNQTGWNSSGMAFVVGLVNPIWAFVGIDSATHMIDEVGYSKSRFLVPKVIITTIIVGFVTSFIYCVGLFFCITDQTAVVESILPIVEIFYQATGNRNLSVFLQCMCITTGFVSGIASGTWQSRILQSFGKSYAPFYKEGSLGNKSLKKLAVLTPGFKSPLYAHFLSQICVTIIGCIFMGSSTAFNAIITACITLLLMSYAVPSFIFLFVIKKEKFIHRIESDVNCVSRPNRRRMSMIPHIICILWTLFCLVFLSFPYTLPVTAGNMNYTSVVYAVVFCIISIVVFPTCI</sequence>